<sequence length="88" mass="10035">MSLQADFDKAAKDVRKLKTRPDDEELKELYGLYKQSVIGDIDIECPALLDLKGKAKWEAWNLQKGLSKEDAMNAYISKAKELIEKYGI</sequence>
<gene>
    <name type="primary">ACBD7</name>
</gene>
<comment type="function">
    <text evidence="1">Binds medium- and long-chain acyl-CoA esters.</text>
</comment>
<comment type="similarity">
    <text evidence="3">Belongs to the ACBD7 family.</text>
</comment>
<evidence type="ECO:0000250" key="1"/>
<evidence type="ECO:0000255" key="2">
    <source>
        <dbReference type="PROSITE-ProRule" id="PRU00573"/>
    </source>
</evidence>
<evidence type="ECO:0000305" key="3"/>
<reference key="1">
    <citation type="submission" date="2005-08" db="EMBL/GenBank/DDBJ databases">
        <authorList>
            <consortium name="NIH - Mammalian Gene Collection (MGC) project"/>
        </authorList>
    </citation>
    <scope>NUCLEOTIDE SEQUENCE [LARGE SCALE MRNA]</scope>
    <source>
        <strain>Hereford</strain>
        <tissue>Hypothalamus</tissue>
    </source>
</reference>
<dbReference type="EMBL" id="BC102899">
    <property type="protein sequence ID" value="AAI02900.1"/>
    <property type="molecule type" value="mRNA"/>
</dbReference>
<dbReference type="RefSeq" id="NP_001106768.1">
    <property type="nucleotide sequence ID" value="NM_001113297.3"/>
</dbReference>
<dbReference type="SMR" id="Q3SZF0"/>
<dbReference type="FunCoup" id="Q3SZF0">
    <property type="interactions" value="818"/>
</dbReference>
<dbReference type="STRING" id="9913.ENSBTAP00000003706"/>
<dbReference type="PaxDb" id="9913-ENSBTAP00000003706"/>
<dbReference type="GeneID" id="508284"/>
<dbReference type="KEGG" id="bta:508284"/>
<dbReference type="CTD" id="414149"/>
<dbReference type="VEuPathDB" id="HostDB:ENSBTAG00000002858"/>
<dbReference type="eggNOG" id="KOG0817">
    <property type="taxonomic scope" value="Eukaryota"/>
</dbReference>
<dbReference type="HOGENOM" id="CLU_118853_4_1_1"/>
<dbReference type="InParanoid" id="Q3SZF0"/>
<dbReference type="OMA" id="IACPAML"/>
<dbReference type="OrthoDB" id="346910at2759"/>
<dbReference type="TreeFam" id="TF335802"/>
<dbReference type="Reactome" id="R-BTA-77289">
    <property type="pathway name" value="Mitochondrial Fatty Acid Beta-Oxidation"/>
</dbReference>
<dbReference type="Proteomes" id="UP000009136">
    <property type="component" value="Chromosome 13"/>
</dbReference>
<dbReference type="Bgee" id="ENSBTAG00000002858">
    <property type="expression patterns" value="Expressed in hypothalamus and 97 other cell types or tissues"/>
</dbReference>
<dbReference type="GO" id="GO:0000062">
    <property type="term" value="F:fatty-acyl-CoA binding"/>
    <property type="evidence" value="ECO:0000318"/>
    <property type="project" value="GO_Central"/>
</dbReference>
<dbReference type="GO" id="GO:0006631">
    <property type="term" value="P:fatty acid metabolic process"/>
    <property type="evidence" value="ECO:0000318"/>
    <property type="project" value="GO_Central"/>
</dbReference>
<dbReference type="Gene3D" id="1.20.80.10">
    <property type="match status" value="1"/>
</dbReference>
<dbReference type="InterPro" id="IPR000582">
    <property type="entry name" value="Acyl-CoA-binding_protein"/>
</dbReference>
<dbReference type="InterPro" id="IPR035984">
    <property type="entry name" value="Acyl-CoA-binding_sf"/>
</dbReference>
<dbReference type="InterPro" id="IPR014352">
    <property type="entry name" value="FERM/acyl-CoA-bd_prot_sf"/>
</dbReference>
<dbReference type="PANTHER" id="PTHR23310:SF51">
    <property type="entry name" value="ACYL-COA-BINDING DOMAIN-CONTAINING PROTEIN 7"/>
    <property type="match status" value="1"/>
</dbReference>
<dbReference type="PANTHER" id="PTHR23310">
    <property type="entry name" value="ACYL-COA-BINDING PROTEIN, ACBP"/>
    <property type="match status" value="1"/>
</dbReference>
<dbReference type="Pfam" id="PF00887">
    <property type="entry name" value="ACBP"/>
    <property type="match status" value="1"/>
</dbReference>
<dbReference type="PRINTS" id="PR00689">
    <property type="entry name" value="ACOABINDINGP"/>
</dbReference>
<dbReference type="SUPFAM" id="SSF47027">
    <property type="entry name" value="Acyl-CoA binding protein"/>
    <property type="match status" value="1"/>
</dbReference>
<dbReference type="PROSITE" id="PS51228">
    <property type="entry name" value="ACB_2"/>
    <property type="match status" value="1"/>
</dbReference>
<protein>
    <recommendedName>
        <fullName>Acyl-CoA-binding domain-containing protein 7</fullName>
    </recommendedName>
</protein>
<keyword id="KW-0446">Lipid-binding</keyword>
<keyword id="KW-1185">Reference proteome</keyword>
<organism>
    <name type="scientific">Bos taurus</name>
    <name type="common">Bovine</name>
    <dbReference type="NCBI Taxonomy" id="9913"/>
    <lineage>
        <taxon>Eukaryota</taxon>
        <taxon>Metazoa</taxon>
        <taxon>Chordata</taxon>
        <taxon>Craniata</taxon>
        <taxon>Vertebrata</taxon>
        <taxon>Euteleostomi</taxon>
        <taxon>Mammalia</taxon>
        <taxon>Eutheria</taxon>
        <taxon>Laurasiatheria</taxon>
        <taxon>Artiodactyla</taxon>
        <taxon>Ruminantia</taxon>
        <taxon>Pecora</taxon>
        <taxon>Bovidae</taxon>
        <taxon>Bovinae</taxon>
        <taxon>Bos</taxon>
    </lineage>
</organism>
<feature type="chain" id="PRO_0000247587" description="Acyl-CoA-binding domain-containing protein 7">
    <location>
        <begin position="1"/>
        <end position="88"/>
    </location>
</feature>
<feature type="domain" description="ACB" evidence="2">
    <location>
        <begin position="3"/>
        <end position="88"/>
    </location>
</feature>
<feature type="binding site" evidence="1">
    <location>
        <position position="15"/>
    </location>
    <ligand>
        <name>an acyl-CoA</name>
        <dbReference type="ChEBI" id="CHEBI:58342"/>
    </ligand>
</feature>
<feature type="binding site" evidence="1">
    <location>
        <begin position="30"/>
        <end position="34"/>
    </location>
    <ligand>
        <name>an acyl-CoA</name>
        <dbReference type="ChEBI" id="CHEBI:58342"/>
    </ligand>
</feature>
<feature type="binding site" evidence="1">
    <location>
        <position position="56"/>
    </location>
    <ligand>
        <name>an acyl-CoA</name>
        <dbReference type="ChEBI" id="CHEBI:58342"/>
    </ligand>
</feature>
<feature type="binding site" evidence="1">
    <location>
        <position position="75"/>
    </location>
    <ligand>
        <name>an acyl-CoA</name>
        <dbReference type="ChEBI" id="CHEBI:58342"/>
    </ligand>
</feature>
<accession>Q3SZF0</accession>
<name>ACBD7_BOVIN</name>
<proteinExistence type="inferred from homology"/>